<reference key="1">
    <citation type="journal article" date="2007" name="DNA Res.">
        <title>Complete genomic structure of the bloom-forming toxic cyanobacterium Microcystis aeruginosa NIES-843.</title>
        <authorList>
            <person name="Kaneko T."/>
            <person name="Nakajima N."/>
            <person name="Okamoto S."/>
            <person name="Suzuki I."/>
            <person name="Tanabe Y."/>
            <person name="Tamaoki M."/>
            <person name="Nakamura Y."/>
            <person name="Kasai F."/>
            <person name="Watanabe A."/>
            <person name="Kawashima K."/>
            <person name="Kishida Y."/>
            <person name="Ono A."/>
            <person name="Shimizu Y."/>
            <person name="Takahashi C."/>
            <person name="Minami C."/>
            <person name="Fujishiro T."/>
            <person name="Kohara M."/>
            <person name="Katoh M."/>
            <person name="Nakazaki N."/>
            <person name="Nakayama S."/>
            <person name="Yamada M."/>
            <person name="Tabata S."/>
            <person name="Watanabe M.M."/>
        </authorList>
    </citation>
    <scope>NUCLEOTIDE SEQUENCE [LARGE SCALE GENOMIC DNA]</scope>
    <source>
        <strain>NIES-843 / IAM M-247</strain>
    </source>
</reference>
<protein>
    <recommendedName>
        <fullName evidence="1">UPF0284 protein MAE_56900</fullName>
    </recommendedName>
</protein>
<accession>B0JHV0</accession>
<feature type="chain" id="PRO_1000136908" description="UPF0284 protein MAE_56900">
    <location>
        <begin position="1"/>
        <end position="359"/>
    </location>
</feature>
<dbReference type="EMBL" id="AP009552">
    <property type="protein sequence ID" value="BAG05512.1"/>
    <property type="molecule type" value="Genomic_DNA"/>
</dbReference>
<dbReference type="SMR" id="B0JHV0"/>
<dbReference type="STRING" id="449447.MAE_56900"/>
<dbReference type="PaxDb" id="449447-MAE_56900"/>
<dbReference type="EnsemblBacteria" id="BAG05512">
    <property type="protein sequence ID" value="BAG05512"/>
    <property type="gene ID" value="MAE_56900"/>
</dbReference>
<dbReference type="KEGG" id="mar:MAE_56900"/>
<dbReference type="eggNOG" id="COG2038">
    <property type="taxonomic scope" value="Bacteria"/>
</dbReference>
<dbReference type="HOGENOM" id="CLU_053134_0_0_3"/>
<dbReference type="BioCyc" id="MAER449447:MAE_RS24785-MONOMER"/>
<dbReference type="Proteomes" id="UP000001510">
    <property type="component" value="Chromosome"/>
</dbReference>
<dbReference type="GO" id="GO:0008939">
    <property type="term" value="F:nicotinate-nucleotide-dimethylbenzimidazole phosphoribosyltransferase activity"/>
    <property type="evidence" value="ECO:0007669"/>
    <property type="project" value="InterPro"/>
</dbReference>
<dbReference type="CDD" id="cd02439">
    <property type="entry name" value="DMB-PRT_CobT"/>
    <property type="match status" value="1"/>
</dbReference>
<dbReference type="Gene3D" id="3.40.50.10210">
    <property type="match status" value="1"/>
</dbReference>
<dbReference type="HAMAP" id="MF_01086">
    <property type="entry name" value="UPF0284"/>
    <property type="match status" value="1"/>
</dbReference>
<dbReference type="InterPro" id="IPR003200">
    <property type="entry name" value="Nict_dMeBzImd_PRibTrfase"/>
</dbReference>
<dbReference type="InterPro" id="IPR002805">
    <property type="entry name" value="Nict_dMeBzImd_PRibTrfase_arc"/>
</dbReference>
<dbReference type="InterPro" id="IPR036087">
    <property type="entry name" value="Nict_dMeBzImd_PRibTrfase_sf"/>
</dbReference>
<dbReference type="NCBIfam" id="TIGR00303">
    <property type="entry name" value="nicotinate mononucleotide-dependent phosphoribosyltransferase CobT"/>
    <property type="match status" value="1"/>
</dbReference>
<dbReference type="NCBIfam" id="NF003372">
    <property type="entry name" value="PRK04447.1-5"/>
    <property type="match status" value="1"/>
</dbReference>
<dbReference type="NCBIfam" id="NF003373">
    <property type="entry name" value="PRK04447.1-6"/>
    <property type="match status" value="1"/>
</dbReference>
<dbReference type="PANTHER" id="PTHR38811">
    <property type="match status" value="1"/>
</dbReference>
<dbReference type="PANTHER" id="PTHR38811:SF1">
    <property type="entry name" value="UPF0284 PROTEIN SLL1500"/>
    <property type="match status" value="1"/>
</dbReference>
<dbReference type="Pfam" id="PF02277">
    <property type="entry name" value="DBI_PRT"/>
    <property type="match status" value="1"/>
</dbReference>
<dbReference type="SUPFAM" id="SSF52733">
    <property type="entry name" value="Nicotinate mononucleotide:5,6-dimethylbenzimidazole phosphoribosyltransferase (CobT)"/>
    <property type="match status" value="1"/>
</dbReference>
<proteinExistence type="inferred from homology"/>
<sequence>MIKIYTEIERGQNWLQRHQKCCPIFALVLGFTETGLIPGISTAGATPEDRKYTAIADAEFIVKGVSPHPRYPLPPLTVGASPAYITRAVVEKLAIPVLVFNAGLPLPPAVDYIELGGQPARCLSTGRALDLTIVKHLFAQGLTWGEKLARQSSYLIIGECVVGGTTTALAILTGLGYRANGKVNSSHPQCNHAQKQSIVEQGLARKEIFDPFEVIAALGDPQQIFVAGMAIAASGQGGVLLAGGTQMLAVSALIQALVAKYAYPVNWENIIVGTTRWVAEDKTGDTVGLARMIGKLPLLATQLDFSASKYPVLQAYQQGFVKEGVGAGGCAIAACLYRNWTNQDLVKAIENLIGFQLNC</sequence>
<gene>
    <name type="ordered locus">MAE_56900</name>
</gene>
<name>Y5690_MICAN</name>
<evidence type="ECO:0000255" key="1">
    <source>
        <dbReference type="HAMAP-Rule" id="MF_01086"/>
    </source>
</evidence>
<organism>
    <name type="scientific">Microcystis aeruginosa (strain NIES-843 / IAM M-2473)</name>
    <dbReference type="NCBI Taxonomy" id="449447"/>
    <lineage>
        <taxon>Bacteria</taxon>
        <taxon>Bacillati</taxon>
        <taxon>Cyanobacteriota</taxon>
        <taxon>Cyanophyceae</taxon>
        <taxon>Oscillatoriophycideae</taxon>
        <taxon>Chroococcales</taxon>
        <taxon>Microcystaceae</taxon>
        <taxon>Microcystis</taxon>
    </lineage>
</organism>
<comment type="similarity">
    <text evidence="1">Belongs to the UPF0284 family.</text>
</comment>